<evidence type="ECO:0000255" key="1">
    <source>
        <dbReference type="HAMAP-Rule" id="MF_01220"/>
    </source>
</evidence>
<sequence length="237" mass="25329">MPNAYKRVLLKLSGEALMGDDAFGINRATIERMVADIAEVVRLGTQLAVVIGGGNIFRGVAGGAAGMDRATADYMGMLATMMNALALQDAMRHAGIEARVQSALRMDQVVEPYIRPRAIRQLEEGKVVIFAAGTGNPFFTTDTAAALRGSEVGAEVVLKATKVDGVYSADPKKDPSATRYSSISFDEAIGRNLQVMDATAFALCRDQKLPIRVFSINKPGALKRIVQGEDEGTLVHV</sequence>
<comment type="function">
    <text evidence="1">Catalyzes the reversible phosphorylation of UMP to UDP.</text>
</comment>
<comment type="catalytic activity">
    <reaction evidence="1">
        <text>UMP + ATP = UDP + ADP</text>
        <dbReference type="Rhea" id="RHEA:24400"/>
        <dbReference type="ChEBI" id="CHEBI:30616"/>
        <dbReference type="ChEBI" id="CHEBI:57865"/>
        <dbReference type="ChEBI" id="CHEBI:58223"/>
        <dbReference type="ChEBI" id="CHEBI:456216"/>
        <dbReference type="EC" id="2.7.4.22"/>
    </reaction>
</comment>
<comment type="activity regulation">
    <text evidence="1">Inhibited by UTP.</text>
</comment>
<comment type="pathway">
    <text evidence="1">Pyrimidine metabolism; CTP biosynthesis via de novo pathway; UDP from UMP (UMPK route): step 1/1.</text>
</comment>
<comment type="subunit">
    <text evidence="1">Homohexamer.</text>
</comment>
<comment type="subcellular location">
    <subcellularLocation>
        <location evidence="1">Cytoplasm</location>
    </subcellularLocation>
</comment>
<comment type="similarity">
    <text evidence="1">Belongs to the UMP kinase family.</text>
</comment>
<dbReference type="EC" id="2.7.4.22" evidence="1"/>
<dbReference type="EMBL" id="CP000570">
    <property type="protein sequence ID" value="ABN84439.1"/>
    <property type="molecule type" value="Genomic_DNA"/>
</dbReference>
<dbReference type="RefSeq" id="WP_004193606.1">
    <property type="nucleotide sequence ID" value="NC_009074.1"/>
</dbReference>
<dbReference type="SMR" id="A3NAU6"/>
<dbReference type="GeneID" id="93060698"/>
<dbReference type="KEGG" id="bpd:BURPS668_2435"/>
<dbReference type="HOGENOM" id="CLU_033861_0_0_4"/>
<dbReference type="UniPathway" id="UPA00159">
    <property type="reaction ID" value="UER00275"/>
</dbReference>
<dbReference type="GO" id="GO:0005829">
    <property type="term" value="C:cytosol"/>
    <property type="evidence" value="ECO:0007669"/>
    <property type="project" value="TreeGrafter"/>
</dbReference>
<dbReference type="GO" id="GO:0005524">
    <property type="term" value="F:ATP binding"/>
    <property type="evidence" value="ECO:0007669"/>
    <property type="project" value="UniProtKB-KW"/>
</dbReference>
<dbReference type="GO" id="GO:0033862">
    <property type="term" value="F:UMP kinase activity"/>
    <property type="evidence" value="ECO:0007669"/>
    <property type="project" value="UniProtKB-EC"/>
</dbReference>
<dbReference type="GO" id="GO:0044210">
    <property type="term" value="P:'de novo' CTP biosynthetic process"/>
    <property type="evidence" value="ECO:0007669"/>
    <property type="project" value="UniProtKB-UniRule"/>
</dbReference>
<dbReference type="GO" id="GO:0006225">
    <property type="term" value="P:UDP biosynthetic process"/>
    <property type="evidence" value="ECO:0007669"/>
    <property type="project" value="TreeGrafter"/>
</dbReference>
<dbReference type="CDD" id="cd04254">
    <property type="entry name" value="AAK_UMPK-PyrH-Ec"/>
    <property type="match status" value="1"/>
</dbReference>
<dbReference type="FunFam" id="3.40.1160.10:FF:000001">
    <property type="entry name" value="Uridylate kinase"/>
    <property type="match status" value="1"/>
</dbReference>
<dbReference type="Gene3D" id="3.40.1160.10">
    <property type="entry name" value="Acetylglutamate kinase-like"/>
    <property type="match status" value="1"/>
</dbReference>
<dbReference type="HAMAP" id="MF_01220_B">
    <property type="entry name" value="PyrH_B"/>
    <property type="match status" value="1"/>
</dbReference>
<dbReference type="InterPro" id="IPR036393">
    <property type="entry name" value="AceGlu_kinase-like_sf"/>
</dbReference>
<dbReference type="InterPro" id="IPR001048">
    <property type="entry name" value="Asp/Glu/Uridylate_kinase"/>
</dbReference>
<dbReference type="InterPro" id="IPR011817">
    <property type="entry name" value="Uridylate_kinase"/>
</dbReference>
<dbReference type="InterPro" id="IPR015963">
    <property type="entry name" value="Uridylate_kinase_bac"/>
</dbReference>
<dbReference type="NCBIfam" id="TIGR02075">
    <property type="entry name" value="pyrH_bact"/>
    <property type="match status" value="1"/>
</dbReference>
<dbReference type="PANTHER" id="PTHR42833">
    <property type="entry name" value="URIDYLATE KINASE"/>
    <property type="match status" value="1"/>
</dbReference>
<dbReference type="PANTHER" id="PTHR42833:SF4">
    <property type="entry name" value="URIDYLATE KINASE PUMPKIN, CHLOROPLASTIC"/>
    <property type="match status" value="1"/>
</dbReference>
<dbReference type="Pfam" id="PF00696">
    <property type="entry name" value="AA_kinase"/>
    <property type="match status" value="1"/>
</dbReference>
<dbReference type="PIRSF" id="PIRSF005650">
    <property type="entry name" value="Uridylate_kin"/>
    <property type="match status" value="1"/>
</dbReference>
<dbReference type="SUPFAM" id="SSF53633">
    <property type="entry name" value="Carbamate kinase-like"/>
    <property type="match status" value="1"/>
</dbReference>
<organism>
    <name type="scientific">Burkholderia pseudomallei (strain 668)</name>
    <dbReference type="NCBI Taxonomy" id="320373"/>
    <lineage>
        <taxon>Bacteria</taxon>
        <taxon>Pseudomonadati</taxon>
        <taxon>Pseudomonadota</taxon>
        <taxon>Betaproteobacteria</taxon>
        <taxon>Burkholderiales</taxon>
        <taxon>Burkholderiaceae</taxon>
        <taxon>Burkholderia</taxon>
        <taxon>pseudomallei group</taxon>
    </lineage>
</organism>
<gene>
    <name evidence="1" type="primary">pyrH</name>
    <name type="ordered locus">BURPS668_2435</name>
</gene>
<reference key="1">
    <citation type="journal article" date="2010" name="Genome Biol. Evol.">
        <title>Continuing evolution of Burkholderia mallei through genome reduction and large-scale rearrangements.</title>
        <authorList>
            <person name="Losada L."/>
            <person name="Ronning C.M."/>
            <person name="DeShazer D."/>
            <person name="Woods D."/>
            <person name="Fedorova N."/>
            <person name="Kim H.S."/>
            <person name="Shabalina S.A."/>
            <person name="Pearson T.R."/>
            <person name="Brinkac L."/>
            <person name="Tan P."/>
            <person name="Nandi T."/>
            <person name="Crabtree J."/>
            <person name="Badger J."/>
            <person name="Beckstrom-Sternberg S."/>
            <person name="Saqib M."/>
            <person name="Schutzer S.E."/>
            <person name="Keim P."/>
            <person name="Nierman W.C."/>
        </authorList>
    </citation>
    <scope>NUCLEOTIDE SEQUENCE [LARGE SCALE GENOMIC DNA]</scope>
    <source>
        <strain>668</strain>
    </source>
</reference>
<accession>A3NAU6</accession>
<proteinExistence type="inferred from homology"/>
<keyword id="KW-0067">ATP-binding</keyword>
<keyword id="KW-0963">Cytoplasm</keyword>
<keyword id="KW-0418">Kinase</keyword>
<keyword id="KW-0547">Nucleotide-binding</keyword>
<keyword id="KW-0665">Pyrimidine biosynthesis</keyword>
<keyword id="KW-0808">Transferase</keyword>
<protein>
    <recommendedName>
        <fullName evidence="1">Uridylate kinase</fullName>
        <shortName evidence="1">UK</shortName>
        <ecNumber evidence="1">2.7.4.22</ecNumber>
    </recommendedName>
    <alternativeName>
        <fullName evidence="1">Uridine monophosphate kinase</fullName>
        <shortName evidence="1">UMP kinase</shortName>
        <shortName evidence="1">UMPK</shortName>
    </alternativeName>
</protein>
<name>PYRH_BURP6</name>
<feature type="chain" id="PRO_0000323815" description="Uridylate kinase">
    <location>
        <begin position="1"/>
        <end position="237"/>
    </location>
</feature>
<feature type="binding site" evidence="1">
    <location>
        <begin position="11"/>
        <end position="14"/>
    </location>
    <ligand>
        <name>ATP</name>
        <dbReference type="ChEBI" id="CHEBI:30616"/>
    </ligand>
</feature>
<feature type="binding site" evidence="1">
    <location>
        <position position="53"/>
    </location>
    <ligand>
        <name>UMP</name>
        <dbReference type="ChEBI" id="CHEBI:57865"/>
    </ligand>
</feature>
<feature type="binding site" evidence="1">
    <location>
        <position position="54"/>
    </location>
    <ligand>
        <name>ATP</name>
        <dbReference type="ChEBI" id="CHEBI:30616"/>
    </ligand>
</feature>
<feature type="binding site" evidence="1">
    <location>
        <position position="58"/>
    </location>
    <ligand>
        <name>ATP</name>
        <dbReference type="ChEBI" id="CHEBI:30616"/>
    </ligand>
</feature>
<feature type="binding site" evidence="1">
    <location>
        <position position="73"/>
    </location>
    <ligand>
        <name>UMP</name>
        <dbReference type="ChEBI" id="CHEBI:57865"/>
    </ligand>
</feature>
<feature type="binding site" evidence="1">
    <location>
        <begin position="134"/>
        <end position="141"/>
    </location>
    <ligand>
        <name>UMP</name>
        <dbReference type="ChEBI" id="CHEBI:57865"/>
    </ligand>
</feature>
<feature type="binding site" evidence="1">
    <location>
        <position position="161"/>
    </location>
    <ligand>
        <name>ATP</name>
        <dbReference type="ChEBI" id="CHEBI:30616"/>
    </ligand>
</feature>
<feature type="binding site" evidence="1">
    <location>
        <position position="167"/>
    </location>
    <ligand>
        <name>ATP</name>
        <dbReference type="ChEBI" id="CHEBI:30616"/>
    </ligand>
</feature>
<feature type="binding site" evidence="1">
    <location>
        <position position="170"/>
    </location>
    <ligand>
        <name>ATP</name>
        <dbReference type="ChEBI" id="CHEBI:30616"/>
    </ligand>
</feature>